<name>ASR_ECO27</name>
<comment type="function">
    <text evidence="1">Required for growth and/or survival at acidic conditions.</text>
</comment>
<comment type="subcellular location">
    <subcellularLocation>
        <location evidence="1">Periplasm</location>
    </subcellularLocation>
</comment>
<comment type="PTM">
    <text evidence="1">Proteolytic processing gives rise to the active protein.</text>
</comment>
<comment type="similarity">
    <text evidence="1">Belongs to the Asr family.</text>
</comment>
<accession>B7URT6</accession>
<organism>
    <name type="scientific">Escherichia coli O127:H6 (strain E2348/69 / EPEC)</name>
    <dbReference type="NCBI Taxonomy" id="574521"/>
    <lineage>
        <taxon>Bacteria</taxon>
        <taxon>Pseudomonadati</taxon>
        <taxon>Pseudomonadota</taxon>
        <taxon>Gammaproteobacteria</taxon>
        <taxon>Enterobacterales</taxon>
        <taxon>Enterobacteriaceae</taxon>
        <taxon>Escherichia</taxon>
    </lineage>
</organism>
<dbReference type="EMBL" id="FM180568">
    <property type="protein sequence ID" value="CAS09229.1"/>
    <property type="molecule type" value="Genomic_DNA"/>
</dbReference>
<dbReference type="KEGG" id="ecg:E2348C_1681"/>
<dbReference type="HOGENOM" id="CLU_102486_2_0_6"/>
<dbReference type="Proteomes" id="UP000008205">
    <property type="component" value="Chromosome"/>
</dbReference>
<dbReference type="GO" id="GO:0042597">
    <property type="term" value="C:periplasmic space"/>
    <property type="evidence" value="ECO:0007669"/>
    <property type="project" value="UniProtKB-SubCell"/>
</dbReference>
<dbReference type="HAMAP" id="MF_00546">
    <property type="entry name" value="Asr"/>
    <property type="match status" value="1"/>
</dbReference>
<dbReference type="InterPro" id="IPR023497">
    <property type="entry name" value="Acid_shock"/>
</dbReference>
<dbReference type="NCBIfam" id="NF033636">
    <property type="entry name" value="acid_shock_Asr"/>
    <property type="match status" value="1"/>
</dbReference>
<dbReference type="Pfam" id="PF06392">
    <property type="entry name" value="Asr"/>
    <property type="match status" value="1"/>
</dbReference>
<proteinExistence type="inferred from homology"/>
<evidence type="ECO:0000255" key="1">
    <source>
        <dbReference type="HAMAP-Rule" id="MF_00546"/>
    </source>
</evidence>
<evidence type="ECO:0000256" key="2">
    <source>
        <dbReference type="SAM" id="MobiDB-lite"/>
    </source>
</evidence>
<reference key="1">
    <citation type="journal article" date="2009" name="J. Bacteriol.">
        <title>Complete genome sequence and comparative genome analysis of enteropathogenic Escherichia coli O127:H6 strain E2348/69.</title>
        <authorList>
            <person name="Iguchi A."/>
            <person name="Thomson N.R."/>
            <person name="Ogura Y."/>
            <person name="Saunders D."/>
            <person name="Ooka T."/>
            <person name="Henderson I.R."/>
            <person name="Harris D."/>
            <person name="Asadulghani M."/>
            <person name="Kurokawa K."/>
            <person name="Dean P."/>
            <person name="Kenny B."/>
            <person name="Quail M.A."/>
            <person name="Thurston S."/>
            <person name="Dougan G."/>
            <person name="Hayashi T."/>
            <person name="Parkhill J."/>
            <person name="Frankel G."/>
        </authorList>
    </citation>
    <scope>NUCLEOTIDE SEQUENCE [LARGE SCALE GENOMIC DNA]</scope>
    <source>
        <strain>E2348/69 / EPEC</strain>
    </source>
</reference>
<protein>
    <recommendedName>
        <fullName evidence="1">Acid shock protein</fullName>
    </recommendedName>
</protein>
<feature type="signal peptide" evidence="1">
    <location>
        <begin position="1"/>
        <end position="21"/>
    </location>
</feature>
<feature type="propeptide" id="PRO_1000146597" evidence="1">
    <location>
        <begin position="22"/>
        <end position="58"/>
    </location>
</feature>
<feature type="chain" id="PRO_1000146598" description="Acid shock protein">
    <location>
        <begin position="59"/>
        <end position="102"/>
    </location>
</feature>
<feature type="region of interest" description="Disordered" evidence="2">
    <location>
        <begin position="22"/>
        <end position="102"/>
    </location>
</feature>
<feature type="compositionally biased region" description="Low complexity" evidence="2">
    <location>
        <begin position="22"/>
        <end position="41"/>
    </location>
</feature>
<feature type="compositionally biased region" description="Basic residues" evidence="2">
    <location>
        <begin position="80"/>
        <end position="90"/>
    </location>
</feature>
<feature type="compositionally biased region" description="Low complexity" evidence="2">
    <location>
        <begin position="91"/>
        <end position="102"/>
    </location>
</feature>
<gene>
    <name evidence="1" type="primary">asr</name>
    <name type="ordered locus">E2348C_1681</name>
</gene>
<keyword id="KW-0574">Periplasm</keyword>
<keyword id="KW-1185">Reference proteome</keyword>
<keyword id="KW-0732">Signal</keyword>
<sequence length="102" mass="10559">MKKVLALVVAAAMGLSSAAFAAETATTPAPTATTTKAAPAKTTHHKKQHKAAPAQKAQAAKKHHKNAKAEQKAPEQKAQAAKKHARKHSHQQPAKPAAQPAA</sequence>